<feature type="chain" id="PRO_0000420004" description="Genome polyprotein">
    <location>
        <begin position="1"/>
        <end position="3099"/>
    </location>
</feature>
<feature type="chain" id="PRO_0000040305" description="P1 protease" evidence="9">
    <location>
        <begin position="1"/>
        <end position="322"/>
    </location>
</feature>
<feature type="chain" id="PRO_0000040306" description="Helper component proteinase" evidence="9">
    <location>
        <begin position="323"/>
        <end position="779"/>
    </location>
</feature>
<feature type="chain" id="PRO_0000040307" description="Protein P3" evidence="1">
    <location>
        <begin position="780"/>
        <end position="1128"/>
    </location>
</feature>
<feature type="chain" id="PRO_0000040308" description="6 kDa protein 1" evidence="1">
    <location>
        <begin position="1129"/>
        <end position="1180"/>
    </location>
</feature>
<feature type="chain" id="PRO_0000040309" description="Cytoplasmic inclusion protein" evidence="1">
    <location>
        <begin position="1181"/>
        <end position="1814"/>
    </location>
</feature>
<feature type="chain" id="PRO_0000040310" description="6 kDa protein 2" evidence="1">
    <location>
        <begin position="1815"/>
        <end position="1867"/>
    </location>
</feature>
<feature type="chain" id="PRO_0000040311" description="Viral genome-linked protein" evidence="1">
    <location>
        <begin position="1868"/>
        <end position="2057"/>
    </location>
</feature>
<feature type="chain" id="PRO_0000040312" description="Nuclear inclusion protein A" evidence="1">
    <location>
        <begin position="2058"/>
        <end position="2303"/>
    </location>
</feature>
<feature type="chain" id="PRO_0000040313" description="Nuclear inclusion protein B" evidence="1">
    <location>
        <begin position="2304"/>
        <end position="2821"/>
    </location>
</feature>
<feature type="chain" id="PRO_0000040314" description="Capsid protein" evidence="1">
    <location>
        <begin position="2822"/>
        <end position="3099"/>
    </location>
</feature>
<feature type="domain" description="Peptidase S30" evidence="15">
    <location>
        <begin position="180"/>
        <end position="322"/>
    </location>
</feature>
<feature type="domain" description="Peptidase C6" evidence="14">
    <location>
        <begin position="657"/>
        <end position="779"/>
    </location>
</feature>
<feature type="domain" description="Helicase ATP-binding" evidence="11">
    <location>
        <begin position="1252"/>
        <end position="1404"/>
    </location>
</feature>
<feature type="domain" description="Helicase C-terminal" evidence="12">
    <location>
        <begin position="1423"/>
        <end position="1582"/>
    </location>
</feature>
<feature type="domain" description="Peptidase C4" evidence="13">
    <location>
        <begin position="2058"/>
        <end position="2276"/>
    </location>
</feature>
<feature type="domain" description="RdRp catalytic" evidence="10">
    <location>
        <begin position="2545"/>
        <end position="2669"/>
    </location>
</feature>
<feature type="region of interest" description="Disordered" evidence="16">
    <location>
        <begin position="2838"/>
        <end position="2869"/>
    </location>
</feature>
<feature type="short sequence motif" description="Involved in interaction with stylet and aphid transmission" evidence="1">
    <location>
        <begin position="374"/>
        <end position="377"/>
    </location>
</feature>
<feature type="short sequence motif" description="Involved in virions binding and aphid transmission" evidence="1">
    <location>
        <begin position="631"/>
        <end position="633"/>
    </location>
</feature>
<feature type="short sequence motif" description="DESH box">
    <location>
        <begin position="1354"/>
        <end position="1357"/>
    </location>
</feature>
<feature type="short sequence motif" description="Nuclear localization signal" evidence="9">
    <location>
        <begin position="1906"/>
        <end position="1915"/>
    </location>
</feature>
<feature type="compositionally biased region" description="Basic and acidic residues" evidence="16">
    <location>
        <begin position="2838"/>
        <end position="2851"/>
    </location>
</feature>
<feature type="active site" description="For P1 proteinase activity" evidence="15">
    <location>
        <position position="233"/>
    </location>
</feature>
<feature type="active site" description="For P1 proteinase activity" evidence="15">
    <location>
        <position position="242"/>
    </location>
</feature>
<feature type="active site" description="For P1 proteinase activity" evidence="15">
    <location>
        <position position="275"/>
    </location>
</feature>
<feature type="active site" description="For helper component proteinase activity" evidence="14">
    <location>
        <position position="665"/>
    </location>
</feature>
<feature type="active site" description="For helper component proteinase activity" evidence="14">
    <location>
        <position position="738"/>
    </location>
</feature>
<feature type="active site" description="For nuclear inclusion protein A activity" evidence="13">
    <location>
        <position position="2103"/>
    </location>
</feature>
<feature type="active site" description="For nuclear inclusion protein A activity" evidence="13">
    <location>
        <position position="2138"/>
    </location>
</feature>
<feature type="active site" description="For nuclear inclusion protein A activity" evidence="13">
    <location>
        <position position="2208"/>
    </location>
</feature>
<feature type="binding site" evidence="11">
    <location>
        <begin position="1265"/>
        <end position="1272"/>
    </location>
    <ligand>
        <name>ATP</name>
        <dbReference type="ChEBI" id="CHEBI:30616"/>
    </ligand>
</feature>
<feature type="site" description="Cleavage; by P1 proteinase" evidence="15">
    <location>
        <begin position="322"/>
        <end position="323"/>
    </location>
</feature>
<feature type="site" description="Cleavage; by autolysis" evidence="14">
    <location>
        <begin position="779"/>
        <end position="780"/>
    </location>
</feature>
<feature type="site" description="Cleavage; by NIa-pro" evidence="6">
    <location>
        <begin position="1128"/>
        <end position="1129"/>
    </location>
</feature>
<feature type="site" description="Cleavage; by NIa-pro" evidence="6">
    <location>
        <begin position="1180"/>
        <end position="1181"/>
    </location>
</feature>
<feature type="site" description="Cleavage; by NIa-pro" evidence="6">
    <location>
        <begin position="1814"/>
        <end position="1815"/>
    </location>
</feature>
<feature type="site" description="Cleavage; by NIa-pro" evidence="6">
    <location>
        <begin position="1867"/>
        <end position="1868"/>
    </location>
</feature>
<feature type="site" description="Cleavage; by NIa-pro" evidence="6">
    <location>
        <begin position="2057"/>
        <end position="2058"/>
    </location>
</feature>
<feature type="site" description="Cleavage; by NIa-pro" evidence="6">
    <location>
        <begin position="2303"/>
        <end position="2304"/>
    </location>
</feature>
<feature type="site" description="Cleavage; by NIa-pro" evidence="6">
    <location>
        <begin position="2821"/>
        <end position="2822"/>
    </location>
</feature>
<feature type="modified residue" description="O-(5'-phospho-RNA)-tyrosine" evidence="3">
    <location>
        <position position="1930"/>
    </location>
</feature>
<feature type="modified residue" description="Phosphothreonine" evidence="5">
    <location>
        <position position="3082"/>
    </location>
</feature>
<name>POLG_PEMVM</name>
<sequence length="3099" mass="351038">MASITFGNACTVVFGQVRKEEVTAGPVAVNLNEGTRMVVVPTAAQMATPTPSVSIKIINRWSNKAVSSYERQVEDVFANFFAKKERSDELLTRYYGKVVQKGNKLMVKRAPLHVARVLEKQRLQDIEDEKAFLQYRDAGVHVAGSVKFTDTRSRGQTVSFRTEHYKPTGKIVQKKKAQKQRANADVDHLIDEVMKICSADCKQVEFISMGKRRLTAKFKLFGKSVIPCIHLAHEQGRRLRRELDPRIHEQVIAHLVTGRKVRELIKDDMVTYGWSGAILNKNLFKRTPFRWDEVVIRGRLYGKLVDARSKLSECSKDKIHQYSSFEAQFWKGWKNKFDTLHPHNKDHICEPTINNEKCGEIVATIFQAIHPVIKVSCSTCRERLTKASNEELNEYLATNLACHKATFDDMRQQHATVNTVLNKIEQTSLANPNLKDSMEIVRLLQNLNQTQARQLMKVNNTLLKGNVATSEEFSDATTQLLEVTRWYAKHLSLVDEGSISSFRNKATSKSLINPSLLCDNQLDRNGNFVWGERGRHSKRFFENFFEEVVPGGGYKKYQIRNSPNCTRKLAIGNLIVPMSLERARNALIGESVERLPVTEACVSRVNGAFMHVASCVTSDNGSAHFSPLYSPTKRHLVVGTTGDSKYIDLPATESDKMYVAKEGYCYINIFLAMLVNVNEDSAKDFTKMIRDTIVPMLGTWPSMMDVATACYILTVFHPETKSAELPRILVDHTNKTMHVIDSFGSISTGYHILKAGTVSQLIHFASNELVSEMKHYVVGGEAPHARRMRMEKALIQGIFKPKQLVYLIEEDPYILMMSLVSPTLLINLFNVGGLEVAMKHWIKKEMNIGLIFSMLSSLAQKVSRADLVNEQITMIDANAAQFIETLAGIDVENPMRNELVSALTMMLARSDVDSTLNKTGFTGFSDTLLEMREKIIGDELNKVWSELSWWEKFSSIIFSRRARKHIMAPLPNTKLHAIDDRYAISCTWLHGKIKARFNGAKSATLEVCKKVTSILKRNTVDSILYICRKCYSDIFYFVNVMLISSMILSVIYTMHKMVIESRAHKQAMVIMKMREDELVVKQMYDQYCKLANETPTKEEFFQYVCKMNKELGERIAPEFEEGSLVVYQAKTETELGLEKVVAYLALIAMIFDGERSDAVFRALSKLKTVFGTLGETVRYQSLDEIESVADEKKMTIDFELEGSEASSSTVMSAKFSDWWYKQLETNRVVPHYRIGGEFVEFTRKTAAEVVNNMRASNASEFLVRGAVGSGKSTGLPHLLAQKGRVLLLEPTRPLAENVCKQLRQAPFQQNPTLRMRGLTTFGSSNIVIMTSGFALHYYANNPTKLQEYDFVMIDESHTMDASAMAFYCLVREYNFQGKIIKVSATPPGKECEFKTQFDVALLIEEDLSFQQFAQSQGQGGNADMTKHGDNILVYVASYNDVDQLAELLIRGNHFVTKVDGRTMKMGSTEIVSKGTASKKHYIIATNIIENGVTLDVDVVVDFGQKVVAELDGDSRCMRYRKVAVSYGERIQRLGRVGRVKKGTALRIGHTEHGISEIPASISTEAAFLCFAYGLPVITHNVTVSILANCTVQQARTMMLFELSPFFLADLVKYNGSMHPEVHKLLKPYKLRDSEIELCKLAIPNSSIGRWLSVHEYAKLGIKIHAVDSVRIPFAGRGIPDKLYSELWHIIQEHKHEAGFGRLTSASASTIAYTLSTDPEAIPRTIALLDNLIAEEMQKKAHFEALNSTLCSQRFTLKNIVDTVRQRYMKDHSKHNIEVLQSARSQILEFNSATHDFKKVASLLGYGFLDTVQYQSKNELSKRLGLKGRWNKSLVTNDLLVCGMVLFGGVWMVWEYAKSAMNEPVRYQGKRQNQKLKFRDARDRKVGREVYGDDGTIEHFFGEAYTKKGKSKGNHTVKGMGRKTRRFIHMYGFDPTEYSFVRFVDPLTGYAIDENITCDISLVQDEVAEVRKQFINEDEISAQSIAENPGIIAYYMSRNADKALKIDLTPHNPLAVGRGGSSIAGFPEREYELRQTGKPLEVKKSEVPPVSKDVVATEGKSMCRGLRNYNPIATSICKLVNESDGHSETIHGIGFGPVIITNSHLFRRNNGTLQIQTHHGVFRVKNSTQLQVSHMAKKDMIIIKMPCDVPPFPSKLRFRQPEQGEKAVLVGSLFQQKSITSSVSESTMVMPVNDSGYWRHWVSTKDGDCGLPLVSTVDGAILGLHGLTSTKSDRNYFVPFDEQFERDILANLEKLDWKRHWLHSSDLIAWGGMSLKENHPHDCFRTSKLVTDLLGLTKDSVEYQSGQDKWVLAGLENNLKAVAQSESQLVTKHVVKGQCMYFQEYLATHSTAEKFFKPLMGAYQPSKLNKEAFTKDLYKYQNEIIVGEVDKDAFDNAVEAVIYLLDDLGFGECAYVTDEEAILDSLNMKAAVGALYKGKKKEYFESLSEPEKHHIVQASCERLFYGEMGVWNGSLKAELRPKEKVALNKTRTFTAAPIDTLLGGKCCVDDFNNRFYSLNIEGPWTVGMTKFYGGWDKLMRKLPDGWRYCHADGSQFDSSLTPFLLNAVLAVRLMFMEDWWVGEQMLRNFYTEIIYTPILTPDGTIVKKFKGNNSGQPSTVVDNTLMVMIAMFYGMKKLNWTDEQIKERIVFFAXGDDLIIAVQPEHEGILDTLQRSLGELGLKYDFSERCDDRQELWFMSHQGHLVDGMYIPKLEQERIVSILEWDRSTVIEHRAEAICAAMIEAWGYPELLKQIRLFYAWILDHDMFKSLVAEGKLPYIAETALRKLYTDADATDVELEEYILRFTEVDEDEDHNDEVRYQSGENKSKVEVDAAAAKLKEKEKEKHKKTEEGTSEGTSQTKEPDVDTGSQGIVYVPKLAKITKKMRMPMVGGQVILHIPHLLDYKPEQVDLSNTRSSQQQFTAWYNGLKEAYEITDDTSMSVLMNGLMVWCIENGTSPNINGNWTMMDGHEQNEYPLKPVIENAKPTFRQIMHHFSDAAEAYIEMRNAEKPYMPRYGLQRNLRDFSYARIAFDFYEITSRTSAKAREIHMQMKAAALNNVAIKTFGLDGNVGTQDEDTERHTANDVNRNMHSLLGMRQM</sequence>
<dbReference type="EC" id="3.4.21.-"/>
<dbReference type="EC" id="3.4.22.45" evidence="2"/>
<dbReference type="EC" id="3.6.4.-"/>
<dbReference type="EC" id="3.4.22.44"/>
<dbReference type="EC" id="2.7.7.48"/>
<dbReference type="EMBL" id="AF023848">
    <property type="protein sequence ID" value="AAB94595.1"/>
    <property type="molecule type" value="Genomic_RNA"/>
</dbReference>
<dbReference type="RefSeq" id="NP_068348.2">
    <property type="nucleotide sequence ID" value="NC_002600.1"/>
</dbReference>
<dbReference type="MEROPS" id="C06.001"/>
<dbReference type="GeneID" id="912241"/>
<dbReference type="KEGG" id="vg:912241"/>
<dbReference type="Proteomes" id="UP000000471">
    <property type="component" value="Segment"/>
</dbReference>
<dbReference type="GO" id="GO:0019029">
    <property type="term" value="C:helical viral capsid"/>
    <property type="evidence" value="ECO:0007669"/>
    <property type="project" value="UniProtKB-KW"/>
</dbReference>
<dbReference type="GO" id="GO:0044161">
    <property type="term" value="C:host cell cytoplasmic vesicle"/>
    <property type="evidence" value="ECO:0007669"/>
    <property type="project" value="UniProtKB-SubCell"/>
</dbReference>
<dbReference type="GO" id="GO:0042025">
    <property type="term" value="C:host cell nucleus"/>
    <property type="evidence" value="ECO:0007669"/>
    <property type="project" value="UniProtKB-SubCell"/>
</dbReference>
<dbReference type="GO" id="GO:0005524">
    <property type="term" value="F:ATP binding"/>
    <property type="evidence" value="ECO:0007669"/>
    <property type="project" value="UniProtKB-KW"/>
</dbReference>
<dbReference type="GO" id="GO:0004197">
    <property type="term" value="F:cysteine-type endopeptidase activity"/>
    <property type="evidence" value="ECO:0007669"/>
    <property type="project" value="InterPro"/>
</dbReference>
<dbReference type="GO" id="GO:0004386">
    <property type="term" value="F:helicase activity"/>
    <property type="evidence" value="ECO:0007669"/>
    <property type="project" value="UniProtKB-KW"/>
</dbReference>
<dbReference type="GO" id="GO:0016818">
    <property type="term" value="F:hydrolase activity, acting on acid anhydrides, in phosphorus-containing anhydrides"/>
    <property type="evidence" value="ECO:0007669"/>
    <property type="project" value="InterPro"/>
</dbReference>
<dbReference type="GO" id="GO:0003723">
    <property type="term" value="F:RNA binding"/>
    <property type="evidence" value="ECO:0007669"/>
    <property type="project" value="InterPro"/>
</dbReference>
<dbReference type="GO" id="GO:0003968">
    <property type="term" value="F:RNA-directed RNA polymerase activity"/>
    <property type="evidence" value="ECO:0007669"/>
    <property type="project" value="UniProtKB-KW"/>
</dbReference>
<dbReference type="GO" id="GO:0008236">
    <property type="term" value="F:serine-type peptidase activity"/>
    <property type="evidence" value="ECO:0007669"/>
    <property type="project" value="UniProtKB-KW"/>
</dbReference>
<dbReference type="GO" id="GO:0005198">
    <property type="term" value="F:structural molecule activity"/>
    <property type="evidence" value="ECO:0007669"/>
    <property type="project" value="InterPro"/>
</dbReference>
<dbReference type="GO" id="GO:0006351">
    <property type="term" value="P:DNA-templated transcription"/>
    <property type="evidence" value="ECO:0007669"/>
    <property type="project" value="InterPro"/>
</dbReference>
<dbReference type="GO" id="GO:0006508">
    <property type="term" value="P:proteolysis"/>
    <property type="evidence" value="ECO:0007669"/>
    <property type="project" value="UniProtKB-KW"/>
</dbReference>
<dbReference type="GO" id="GO:0052170">
    <property type="term" value="P:symbiont-mediated suppression of host innate immune response"/>
    <property type="evidence" value="ECO:0007669"/>
    <property type="project" value="UniProtKB-KW"/>
</dbReference>
<dbReference type="GO" id="GO:0039694">
    <property type="term" value="P:viral RNA genome replication"/>
    <property type="evidence" value="ECO:0007669"/>
    <property type="project" value="InterPro"/>
</dbReference>
<dbReference type="GO" id="GO:0075523">
    <property type="term" value="P:viral translational frameshifting"/>
    <property type="evidence" value="ECO:0007669"/>
    <property type="project" value="UniProtKB-KW"/>
</dbReference>
<dbReference type="CDD" id="cd23175">
    <property type="entry name" value="ps-ssRNAv_Potyviridae_RdRp"/>
    <property type="match status" value="1"/>
</dbReference>
<dbReference type="Gene3D" id="3.30.70.270">
    <property type="match status" value="1"/>
</dbReference>
<dbReference type="Gene3D" id="3.90.70.150">
    <property type="entry name" value="Helper component proteinase"/>
    <property type="match status" value="1"/>
</dbReference>
<dbReference type="Gene3D" id="3.40.50.300">
    <property type="entry name" value="P-loop containing nucleotide triphosphate hydrolases"/>
    <property type="match status" value="2"/>
</dbReference>
<dbReference type="Gene3D" id="2.40.10.10">
    <property type="entry name" value="Trypsin-like serine proteases"/>
    <property type="match status" value="2"/>
</dbReference>
<dbReference type="InterPro" id="IPR011545">
    <property type="entry name" value="DEAD/DEAH_box_helicase_dom"/>
</dbReference>
<dbReference type="InterPro" id="IPR043502">
    <property type="entry name" value="DNA/RNA_pol_sf"/>
</dbReference>
<dbReference type="InterPro" id="IPR001456">
    <property type="entry name" value="HC-pro"/>
</dbReference>
<dbReference type="InterPro" id="IPR031159">
    <property type="entry name" value="HC_PRO_CPD_dom"/>
</dbReference>
<dbReference type="InterPro" id="IPR042308">
    <property type="entry name" value="HC_PRO_CPD_sf"/>
</dbReference>
<dbReference type="InterPro" id="IPR014001">
    <property type="entry name" value="Helicase_ATP-bd"/>
</dbReference>
<dbReference type="InterPro" id="IPR001650">
    <property type="entry name" value="Helicase_C-like"/>
</dbReference>
<dbReference type="InterPro" id="IPR027417">
    <property type="entry name" value="P-loop_NTPase"/>
</dbReference>
<dbReference type="InterPro" id="IPR002540">
    <property type="entry name" value="Pept_S30_P1_potyvir"/>
</dbReference>
<dbReference type="InterPro" id="IPR009003">
    <property type="entry name" value="Peptidase_S1_PA"/>
</dbReference>
<dbReference type="InterPro" id="IPR043504">
    <property type="entry name" value="Peptidase_S1_PA_chymotrypsin"/>
</dbReference>
<dbReference type="InterPro" id="IPR001592">
    <property type="entry name" value="Poty_coat"/>
</dbReference>
<dbReference type="InterPro" id="IPR001730">
    <property type="entry name" value="Potyv_NIa-pro_dom"/>
</dbReference>
<dbReference type="InterPro" id="IPR039560">
    <property type="entry name" value="Potyvirid-P3"/>
</dbReference>
<dbReference type="InterPro" id="IPR013648">
    <property type="entry name" value="PP_Potyviridae"/>
</dbReference>
<dbReference type="InterPro" id="IPR043128">
    <property type="entry name" value="Rev_trsase/Diguanyl_cyclase"/>
</dbReference>
<dbReference type="InterPro" id="IPR001205">
    <property type="entry name" value="RNA-dir_pol_C"/>
</dbReference>
<dbReference type="InterPro" id="IPR007094">
    <property type="entry name" value="RNA-dir_pol_PSvirus"/>
</dbReference>
<dbReference type="PANTHER" id="PTHR43519">
    <property type="entry name" value="ATP-DEPENDENT RNA HELICASE HRPB"/>
    <property type="match status" value="1"/>
</dbReference>
<dbReference type="PANTHER" id="PTHR43519:SF1">
    <property type="entry name" value="ATP-DEPENDENT RNA HELICASE HRPB"/>
    <property type="match status" value="1"/>
</dbReference>
<dbReference type="Pfam" id="PF00270">
    <property type="entry name" value="DEAD"/>
    <property type="match status" value="1"/>
</dbReference>
<dbReference type="Pfam" id="PF00271">
    <property type="entry name" value="Helicase_C"/>
    <property type="match status" value="1"/>
</dbReference>
<dbReference type="Pfam" id="PF00863">
    <property type="entry name" value="Peptidase_C4"/>
    <property type="match status" value="1"/>
</dbReference>
<dbReference type="Pfam" id="PF00851">
    <property type="entry name" value="Peptidase_C6"/>
    <property type="match status" value="1"/>
</dbReference>
<dbReference type="Pfam" id="PF01577">
    <property type="entry name" value="Peptidase_S30"/>
    <property type="match status" value="1"/>
</dbReference>
<dbReference type="Pfam" id="PF00767">
    <property type="entry name" value="Poty_coat"/>
    <property type="match status" value="1"/>
</dbReference>
<dbReference type="Pfam" id="PF08440">
    <property type="entry name" value="Poty_PP"/>
    <property type="match status" value="1"/>
</dbReference>
<dbReference type="Pfam" id="PF13608">
    <property type="entry name" value="Potyvirid-P3"/>
    <property type="match status" value="1"/>
</dbReference>
<dbReference type="Pfam" id="PF00680">
    <property type="entry name" value="RdRP_1"/>
    <property type="match status" value="1"/>
</dbReference>
<dbReference type="PRINTS" id="PR00966">
    <property type="entry name" value="NIAPOTYPTASE"/>
</dbReference>
<dbReference type="SMART" id="SM00487">
    <property type="entry name" value="DEXDc"/>
    <property type="match status" value="1"/>
</dbReference>
<dbReference type="SMART" id="SM00490">
    <property type="entry name" value="HELICc"/>
    <property type="match status" value="1"/>
</dbReference>
<dbReference type="SUPFAM" id="SSF56672">
    <property type="entry name" value="DNA/RNA polymerases"/>
    <property type="match status" value="1"/>
</dbReference>
<dbReference type="SUPFAM" id="SSF52540">
    <property type="entry name" value="P-loop containing nucleoside triphosphate hydrolases"/>
    <property type="match status" value="2"/>
</dbReference>
<dbReference type="SUPFAM" id="SSF50494">
    <property type="entry name" value="Trypsin-like serine proteases"/>
    <property type="match status" value="1"/>
</dbReference>
<dbReference type="PROSITE" id="PS51744">
    <property type="entry name" value="HC_PRO_CPD"/>
    <property type="match status" value="1"/>
</dbReference>
<dbReference type="PROSITE" id="PS51192">
    <property type="entry name" value="HELICASE_ATP_BIND_1"/>
    <property type="match status" value="1"/>
</dbReference>
<dbReference type="PROSITE" id="PS51194">
    <property type="entry name" value="HELICASE_CTER"/>
    <property type="match status" value="1"/>
</dbReference>
<dbReference type="PROSITE" id="PS51436">
    <property type="entry name" value="POTYVIRUS_NIA_PRO"/>
    <property type="match status" value="1"/>
</dbReference>
<dbReference type="PROSITE" id="PS51871">
    <property type="entry name" value="PV_P1_PRO"/>
    <property type="match status" value="1"/>
</dbReference>
<dbReference type="PROSITE" id="PS50507">
    <property type="entry name" value="RDRP_SSRNA_POS"/>
    <property type="match status" value="1"/>
</dbReference>
<comment type="function">
    <molecule>Helper component proteinase</molecule>
    <text evidence="2">Required for aphid transmission and also has proteolytic activity. Only cleaves a Gly-Gly dipeptide at its own C-terminus. Interacts with virions and aphid stylets. Acts as a suppressor of RNA-mediated gene silencing, also known as post-transcriptional gene silencing (PTGS), a mechanism of plant viral defense that limits the accumulation of viral RNAs. May have RNA-binding activity.</text>
</comment>
<comment type="function">
    <molecule>Cytoplasmic inclusion protein</molecule>
    <text>Has helicase activity. It may be involved in replication.</text>
</comment>
<comment type="function">
    <molecule>6 kDa protein 1</molecule>
    <text evidence="4 8">Indispensable for virus replication (By similarity). Reduces the abundance of host transcripts related to jasmonic acid biosynthesis therefore altering the host defenses (By similarity). In order to increase its own stability, decreases host protein degradation pathways (By similarity).</text>
</comment>
<comment type="function">
    <molecule>6 kDa protein 2</molecule>
    <text evidence="3">Indispensable for virus replication.</text>
</comment>
<comment type="function">
    <molecule>Viral genome-linked protein</molecule>
    <text evidence="6">Mediates the cap-independent, EIF4E-dependent translation of viral genomic RNAs (By similarity). Binds to the cap-binding site of host EIF4E and thus interferes with the host EIF4E-dependent mRNA export and translation (By similarity). VPg-RNA directly binds EIF4E and is a template for transcription (By similarity). Also forms trimeric complexes with EIF4E-EIF4G, which are templates for translation (By similarity).</text>
</comment>
<comment type="function">
    <molecule>Nuclear inclusion protein A</molecule>
    <text evidence="2">Has RNA-binding and proteolytic activities.</text>
</comment>
<comment type="function">
    <molecule>Nuclear inclusion protein B</molecule>
    <text>An RNA-dependent RNA polymerase that plays an essential role in the virus replication.</text>
</comment>
<comment type="function">
    <molecule>Capsid protein</molecule>
    <text evidence="2">Involved in aphid transmission, cell-to-cell and systemis movement, encapsidation of the viral RNA and in the regulation of viral RNA amplification.</text>
</comment>
<comment type="catalytic activity">
    <molecule>Nuclear inclusion protein B</molecule>
    <reaction evidence="10">
        <text>RNA(n) + a ribonucleoside 5'-triphosphate = RNA(n+1) + diphosphate</text>
        <dbReference type="Rhea" id="RHEA:21248"/>
        <dbReference type="Rhea" id="RHEA-COMP:14527"/>
        <dbReference type="Rhea" id="RHEA-COMP:17342"/>
        <dbReference type="ChEBI" id="CHEBI:33019"/>
        <dbReference type="ChEBI" id="CHEBI:61557"/>
        <dbReference type="ChEBI" id="CHEBI:140395"/>
        <dbReference type="EC" id="2.7.7.48"/>
    </reaction>
</comment>
<comment type="catalytic activity">
    <molecule>Nuclear inclusion protein A</molecule>
    <reaction evidence="2">
        <text>Hydrolyzes glutaminyl bonds, and activity is further restricted by preferences for the amino acids in P6 - P1' that vary with the species of potyvirus, e.g. Glu-Xaa-Xaa-Tyr-Xaa-Gln-|-(Ser or Gly) for the enzyme from tobacco etch virus. The natural substrate is the viral polyprotein, but other proteins and oligopeptides containing the appropriate consensus sequence are also cleaved.</text>
        <dbReference type="EC" id="3.4.22.44"/>
    </reaction>
</comment>
<comment type="catalytic activity">
    <molecule>Helper component proteinase</molecule>
    <reaction evidence="2">
        <text>Hydrolyzes a Gly-|-Gly bond at its own C-terminus, commonly in the sequence -Tyr-Xaa-Val-Gly-|-Gly, in the processing of the potyviral polyprotein.</text>
        <dbReference type="EC" id="3.4.22.45"/>
    </reaction>
</comment>
<comment type="subunit">
    <molecule>Viral genome-linked protein</molecule>
    <text evidence="6">Interacts with host eIF4E protein (via cap-binding region); this interaction mediates the translation of the VPg-viral RNA conjugates (By similarity). Part of a complex that comprises VPg, RNA, host EIF4E and EIF4G; this interaction mediates the translation of the VPg-viral RNA conjugates (By similarity).</text>
</comment>
<comment type="subcellular location">
    <molecule>6 kDa protein 1</molecule>
    <subcellularLocation>
        <location>Host cytoplasmic vesicle</location>
    </subcellularLocation>
    <text evidence="4">Probably colocalizes with 6K2-induced vesicles associated with host chloroplasts.</text>
</comment>
<comment type="subcellular location">
    <molecule>6 kDa protein 2</molecule>
    <subcellularLocation>
        <location evidence="3">Host cytoplasmic vesicle</location>
    </subcellularLocation>
    <text evidence="3">6K-induced vesicles associate with host chloroplasts.</text>
</comment>
<comment type="subcellular location">
    <molecule>Viral genome-linked protein</molecule>
    <subcellularLocation>
        <location evidence="7">Host nucleus</location>
    </subcellularLocation>
    <text evidence="7">Binds to host plant eIF4E proteins in the host nucleus.</text>
</comment>
<comment type="subcellular location">
    <molecule>Capsid protein</molecule>
    <subcellularLocation>
        <location evidence="17">Virion</location>
    </subcellularLocation>
</comment>
<comment type="alternative products">
    <event type="ribosomal frameshifting"/>
    <isoform>
        <id>O56075-1</id>
        <name>Genome polyprotein</name>
        <sequence type="displayed"/>
    </isoform>
    <isoform>
        <id>P0CK00-1</id>
        <name>P3N-PIPO polyprotein</name>
        <sequence type="external"/>
    </isoform>
</comment>
<comment type="domain">
    <molecule>Helper component proteinase</molecule>
    <text>The N-terminus is involved in interaction with stylets. The central part is involved in interaction with virions and the C-terminus is involved in cell-to cell movement of the virus.</text>
</comment>
<comment type="PTM">
    <molecule>Viral genome-linked protein</molecule>
    <text evidence="3">VPg is uridylylated by the polymerase and is covalently attached to the 5'-end of the genomic RNA. This uridylylated form acts as a nucleotide-peptide primer for the polymerase (By similarity).</text>
</comment>
<comment type="PTM">
    <molecule>Genome polyprotein</molecule>
    <text evidence="1">Potyviral RNA is expressed as two polyproteins which undergo post-translational proteolytic processing. Genome polyprotein is processed by NIa-pro, P1 and HC-pro proteinases resulting in the production of at least ten individual proteins. P3N-PIPO polyprotein is cleaved by P1 and HC-pro proteinases resulting in the production of three individual proteins. The P1 proteinase and the HC-pro cleave only their respective C-termini autocatalytically. 6K1 is essential for proper proteolytic separation of P3 from CI (By similarity).</text>
</comment>
<comment type="miscellaneous">
    <molecule>Isoform Genome polyprotein</molecule>
    <text>Produced by conventional translation.</text>
</comment>
<comment type="similarity">
    <text evidence="17">Belongs to the potyviridae genome polyprotein family.</text>
</comment>
<evidence type="ECO:0000250" key="1"/>
<evidence type="ECO:0000250" key="2">
    <source>
        <dbReference type="UniProtKB" id="P04517"/>
    </source>
</evidence>
<evidence type="ECO:0000250" key="3">
    <source>
        <dbReference type="UniProtKB" id="P09814"/>
    </source>
</evidence>
<evidence type="ECO:0000250" key="4">
    <source>
        <dbReference type="UniProtKB" id="P13529"/>
    </source>
</evidence>
<evidence type="ECO:0000250" key="5">
    <source>
        <dbReference type="UniProtKB" id="P17767"/>
    </source>
</evidence>
<evidence type="ECO:0000250" key="6">
    <source>
        <dbReference type="UniProtKB" id="P18247"/>
    </source>
</evidence>
<evidence type="ECO:0000250" key="7">
    <source>
        <dbReference type="UniProtKB" id="P21231"/>
    </source>
</evidence>
<evidence type="ECO:0000250" key="8">
    <source>
        <dbReference type="UniProtKB" id="P89509"/>
    </source>
</evidence>
<evidence type="ECO:0000255" key="9"/>
<evidence type="ECO:0000255" key="10">
    <source>
        <dbReference type="PROSITE-ProRule" id="PRU00539"/>
    </source>
</evidence>
<evidence type="ECO:0000255" key="11">
    <source>
        <dbReference type="PROSITE-ProRule" id="PRU00541"/>
    </source>
</evidence>
<evidence type="ECO:0000255" key="12">
    <source>
        <dbReference type="PROSITE-ProRule" id="PRU00542"/>
    </source>
</evidence>
<evidence type="ECO:0000255" key="13">
    <source>
        <dbReference type="PROSITE-ProRule" id="PRU00766"/>
    </source>
</evidence>
<evidence type="ECO:0000255" key="14">
    <source>
        <dbReference type="PROSITE-ProRule" id="PRU01080"/>
    </source>
</evidence>
<evidence type="ECO:0000255" key="15">
    <source>
        <dbReference type="PROSITE-ProRule" id="PRU01219"/>
    </source>
</evidence>
<evidence type="ECO:0000256" key="16">
    <source>
        <dbReference type="SAM" id="MobiDB-lite"/>
    </source>
</evidence>
<evidence type="ECO:0000305" key="17"/>
<proteinExistence type="inferred from homology"/>
<keyword id="KW-0067">ATP-binding</keyword>
<keyword id="KW-0167">Capsid protein</keyword>
<keyword id="KW-0191">Covalent protein-RNA linkage</keyword>
<keyword id="KW-1139">Helical capsid protein</keyword>
<keyword id="KW-0347">Helicase</keyword>
<keyword id="KW-1036">Host cytoplasmic vesicle</keyword>
<keyword id="KW-1048">Host nucleus</keyword>
<keyword id="KW-0945">Host-virus interaction</keyword>
<keyword id="KW-0378">Hydrolase</keyword>
<keyword id="KW-1090">Inhibition of host innate immune response by virus</keyword>
<keyword id="KW-0547">Nucleotide-binding</keyword>
<keyword id="KW-0548">Nucleotidyltransferase</keyword>
<keyword id="KW-0597">Phosphoprotein</keyword>
<keyword id="KW-0645">Protease</keyword>
<keyword id="KW-0688">Ribosomal frameshifting</keyword>
<keyword id="KW-0696">RNA-directed RNA polymerase</keyword>
<keyword id="KW-0720">Serine protease</keyword>
<keyword id="KW-0941">Suppressor of RNA silencing</keyword>
<keyword id="KW-0788">Thiol protease</keyword>
<keyword id="KW-0808">Transferase</keyword>
<keyword id="KW-0899">Viral immunoevasion</keyword>
<keyword id="KW-0693">Viral RNA replication</keyword>
<keyword id="KW-0946">Virion</keyword>
<reference key="1">
    <citation type="submission" date="1997-09" db="EMBL/GenBank/DDBJ databases">
        <title>The complete nucleotide sequence of peanut mottle virus (M strain) genomic RNA.</title>
        <authorList>
            <person name="Flasinski S."/>
            <person name="Gonzales R.A."/>
            <person name="Cassidy B.G."/>
        </authorList>
    </citation>
    <scope>NUCLEOTIDE SEQUENCE [GENOMIC RNA]</scope>
</reference>
<reference key="2">
    <citation type="journal article" date="2001" name="Virus Res.">
        <title>Potyvirus proteins: a wealth of functions.</title>
        <authorList>
            <person name="Urcuqui-Inchima S."/>
            <person name="Haenni A.L."/>
            <person name="Bernardi F."/>
        </authorList>
    </citation>
    <scope>REVIEW</scope>
</reference>
<accession>O56075</accession>
<protein>
    <recommendedName>
        <fullName>Genome polyprotein</fullName>
    </recommendedName>
    <component>
        <recommendedName>
            <fullName>P1 protease</fullName>
            <ecNumber>3.4.21.-</ecNumber>
        </recommendedName>
        <alternativeName>
            <fullName>Leader protease P1</fullName>
        </alternativeName>
        <alternativeName>
            <fullName>N-terminal protein</fullName>
        </alternativeName>
        <alternativeName>
            <fullName>P1 proteinase</fullName>
        </alternativeName>
    </component>
    <component>
        <recommendedName>
            <fullName>Helper component proteinase</fullName>
            <shortName>HC-pro</shortName>
            <ecNumber evidence="2">3.4.22.45</ecNumber>
        </recommendedName>
    </component>
    <component>
        <recommendedName>
            <fullName>Protein P3</fullName>
        </recommendedName>
    </component>
    <component>
        <recommendedName>
            <fullName>6 kDa protein 1</fullName>
            <shortName>6K1</shortName>
        </recommendedName>
    </component>
    <component>
        <recommendedName>
            <fullName>Cytoplasmic inclusion protein</fullName>
            <shortName>CI</shortName>
            <ecNumber>3.6.4.-</ecNumber>
        </recommendedName>
    </component>
    <component>
        <recommendedName>
            <fullName>6 kDa protein 2</fullName>
            <shortName>6K2</shortName>
        </recommendedName>
    </component>
    <component>
        <recommendedName>
            <fullName>Viral genome-linked protein</fullName>
        </recommendedName>
        <alternativeName>
            <fullName>VPg</fullName>
        </alternativeName>
    </component>
    <component>
        <recommendedName>
            <fullName>Nuclear inclusion protein A</fullName>
            <shortName>NI-a</shortName>
            <shortName>NIa</shortName>
            <ecNumber>3.4.22.44</ecNumber>
        </recommendedName>
        <alternativeName>
            <fullName>49 kDa proteinase</fullName>
            <shortName>49 kDa-Pro</shortName>
        </alternativeName>
        <alternativeName>
            <fullName>NIa-pro</fullName>
        </alternativeName>
    </component>
    <component>
        <recommendedName>
            <fullName>Nuclear inclusion protein B</fullName>
            <shortName>NI-b</shortName>
            <shortName>NIb</shortName>
            <ecNumber>2.7.7.48</ecNumber>
        </recommendedName>
        <alternativeName>
            <fullName>RNA-directed RNA polymerase</fullName>
        </alternativeName>
    </component>
    <component>
        <recommendedName>
            <fullName>Capsid protein</fullName>
            <shortName>CP</shortName>
        </recommendedName>
        <alternativeName>
            <fullName>Coat protein</fullName>
        </alternativeName>
    </component>
</protein>
<organism>
    <name type="scientific">Peanut mottle virus (strain M)</name>
    <dbReference type="NCBI Taxonomy" id="103926"/>
    <lineage>
        <taxon>Viruses</taxon>
        <taxon>Riboviria</taxon>
        <taxon>Orthornavirae</taxon>
        <taxon>Pisuviricota</taxon>
        <taxon>Stelpaviricetes</taxon>
        <taxon>Patatavirales</taxon>
        <taxon>Potyviridae</taxon>
        <taxon>Potyvirus</taxon>
        <taxon>Peanut mottle virus</taxon>
    </lineage>
</organism>
<organismHost>
    <name type="scientific">Arachis hypogaea</name>
    <name type="common">Peanut</name>
    <dbReference type="NCBI Taxonomy" id="3818"/>
</organismHost>
<organismHost>
    <name type="scientific">Arachis pintoi</name>
    <dbReference type="NCBI Taxonomy" id="108216"/>
</organismHost>
<organismHost>
    <name type="scientific">Cassia</name>
    <dbReference type="NCBI Taxonomy" id="53851"/>
</organismHost>
<organismHost>
    <name type="scientific">Glycine max</name>
    <name type="common">Soybean</name>
    <name type="synonym">Glycine hispida</name>
    <dbReference type="NCBI Taxonomy" id="3847"/>
</organismHost>
<organismHost>
    <name type="scientific">Phaseolus vulgaris</name>
    <name type="common">Kidney bean</name>
    <name type="synonym">French bean</name>
    <dbReference type="NCBI Taxonomy" id="3885"/>
</organismHost>
<organismHost>
    <name type="scientific">Pisum sativum</name>
    <name type="common">Garden pea</name>
    <name type="synonym">Lathyrus oleraceus</name>
    <dbReference type="NCBI Taxonomy" id="3888"/>
</organismHost>
<organismHost>
    <name type="scientific">Stylosanthes</name>
    <dbReference type="NCBI Taxonomy" id="35627"/>
</organismHost>